<comment type="catalytic activity">
    <reaction>
        <text>a 1,2-diacyl-sn-glycero-3-phosphate + CTP + H(+) = a CDP-1,2-diacyl-sn-glycerol + diphosphate</text>
        <dbReference type="Rhea" id="RHEA:16229"/>
        <dbReference type="ChEBI" id="CHEBI:15378"/>
        <dbReference type="ChEBI" id="CHEBI:33019"/>
        <dbReference type="ChEBI" id="CHEBI:37563"/>
        <dbReference type="ChEBI" id="CHEBI:58332"/>
        <dbReference type="ChEBI" id="CHEBI:58608"/>
        <dbReference type="EC" id="2.7.7.41"/>
    </reaction>
</comment>
<comment type="pathway">
    <text>Phospholipid metabolism; CDP-diacylglycerol biosynthesis; CDP-diacylglycerol from sn-glycerol 3-phosphate: step 3/3.</text>
</comment>
<comment type="subcellular location">
    <subcellularLocation>
        <location evidence="1">Cell inner membrane</location>
        <topology evidence="1">Multi-pass membrane protein</topology>
    </subcellularLocation>
</comment>
<comment type="similarity">
    <text evidence="3">Belongs to the CDS family.</text>
</comment>
<accession>Q2YRP9</accession>
<accession>Q57CY2</accession>
<accession>Q59173</accession>
<reference key="1">
    <citation type="submission" date="1996-03" db="EMBL/GenBank/DDBJ databases">
        <title>Isolation and sequence of the group 1 outer membrane protein of Brucella abortus.</title>
        <authorList>
            <person name="Bearden S.W."/>
            <person name="Ficht T.A."/>
        </authorList>
    </citation>
    <scope>NUCLEOTIDE SEQUENCE [GENOMIC DNA]</scope>
</reference>
<reference key="2">
    <citation type="journal article" date="2005" name="Infect. Immun.">
        <title>Whole-genome analyses of speciation events in pathogenic Brucellae.</title>
        <authorList>
            <person name="Chain P.S."/>
            <person name="Comerci D.J."/>
            <person name="Tolmasky M.E."/>
            <person name="Larimer F.W."/>
            <person name="Malfatti S.A."/>
            <person name="Vergez L.M."/>
            <person name="Aguero F."/>
            <person name="Land M.L."/>
            <person name="Ugalde R.A."/>
            <person name="Garcia E."/>
        </authorList>
    </citation>
    <scope>NUCLEOTIDE SEQUENCE [LARGE SCALE GENOMIC DNA]</scope>
    <source>
        <strain>2308</strain>
    </source>
</reference>
<dbReference type="EC" id="2.7.7.41"/>
<dbReference type="EMBL" id="U51683">
    <property type="protein sequence ID" value="AAA96785.1"/>
    <property type="molecule type" value="Genomic_DNA"/>
</dbReference>
<dbReference type="EMBL" id="AM040264">
    <property type="protein sequence ID" value="CAJ11135.1"/>
    <property type="molecule type" value="Genomic_DNA"/>
</dbReference>
<dbReference type="RefSeq" id="WP_002964284.1">
    <property type="nucleotide sequence ID" value="NZ_KN046823.1"/>
</dbReference>
<dbReference type="SMR" id="Q2YRP9"/>
<dbReference type="STRING" id="359391.BAB1_1179"/>
<dbReference type="KEGG" id="bmf:BAB1_1179"/>
<dbReference type="PATRIC" id="fig|359391.11.peg.77"/>
<dbReference type="HOGENOM" id="CLU_037294_1_1_5"/>
<dbReference type="PhylomeDB" id="Q2YRP9"/>
<dbReference type="UniPathway" id="UPA00557">
    <property type="reaction ID" value="UER00614"/>
</dbReference>
<dbReference type="Proteomes" id="UP000002719">
    <property type="component" value="Chromosome I"/>
</dbReference>
<dbReference type="GO" id="GO:0005886">
    <property type="term" value="C:plasma membrane"/>
    <property type="evidence" value="ECO:0007669"/>
    <property type="project" value="UniProtKB-SubCell"/>
</dbReference>
<dbReference type="GO" id="GO:0004605">
    <property type="term" value="F:phosphatidate cytidylyltransferase activity"/>
    <property type="evidence" value="ECO:0007669"/>
    <property type="project" value="UniProtKB-EC"/>
</dbReference>
<dbReference type="GO" id="GO:0016024">
    <property type="term" value="P:CDP-diacylglycerol biosynthetic process"/>
    <property type="evidence" value="ECO:0007669"/>
    <property type="project" value="UniProtKB-UniPathway"/>
</dbReference>
<dbReference type="InterPro" id="IPR000374">
    <property type="entry name" value="PC_trans"/>
</dbReference>
<dbReference type="PANTHER" id="PTHR46382">
    <property type="entry name" value="PHOSPHATIDATE CYTIDYLYLTRANSFERASE"/>
    <property type="match status" value="1"/>
</dbReference>
<dbReference type="PANTHER" id="PTHR46382:SF1">
    <property type="entry name" value="PHOSPHATIDATE CYTIDYLYLTRANSFERASE"/>
    <property type="match status" value="1"/>
</dbReference>
<dbReference type="Pfam" id="PF01148">
    <property type="entry name" value="CTP_transf_1"/>
    <property type="match status" value="1"/>
</dbReference>
<dbReference type="PROSITE" id="PS01315">
    <property type="entry name" value="CDS"/>
    <property type="match status" value="1"/>
</dbReference>
<evidence type="ECO:0000250" key="1"/>
<evidence type="ECO:0000255" key="2"/>
<evidence type="ECO:0000305" key="3"/>
<keyword id="KW-0997">Cell inner membrane</keyword>
<keyword id="KW-1003">Cell membrane</keyword>
<keyword id="KW-0444">Lipid biosynthesis</keyword>
<keyword id="KW-0443">Lipid metabolism</keyword>
<keyword id="KW-0472">Membrane</keyword>
<keyword id="KW-0548">Nucleotidyltransferase</keyword>
<keyword id="KW-0594">Phospholipid biosynthesis</keyword>
<keyword id="KW-1208">Phospholipid metabolism</keyword>
<keyword id="KW-1185">Reference proteome</keyword>
<keyword id="KW-0808">Transferase</keyword>
<keyword id="KW-0812">Transmembrane</keyword>
<keyword id="KW-1133">Transmembrane helix</keyword>
<feature type="chain" id="PRO_0000090728" description="Phosphatidate cytidylyltransferase">
    <location>
        <begin position="1"/>
        <end position="270"/>
    </location>
</feature>
<feature type="transmembrane region" description="Helical" evidence="2">
    <location>
        <begin position="19"/>
        <end position="39"/>
    </location>
</feature>
<feature type="transmembrane region" description="Helical" evidence="2">
    <location>
        <begin position="53"/>
        <end position="73"/>
    </location>
</feature>
<feature type="transmembrane region" description="Helical" evidence="2">
    <location>
        <begin position="76"/>
        <end position="96"/>
    </location>
</feature>
<feature type="transmembrane region" description="Helical" evidence="2">
    <location>
        <begin position="101"/>
        <end position="121"/>
    </location>
</feature>
<feature type="transmembrane region" description="Helical" evidence="2">
    <location>
        <begin position="126"/>
        <end position="146"/>
    </location>
</feature>
<feature type="transmembrane region" description="Helical" evidence="2">
    <location>
        <begin position="183"/>
        <end position="203"/>
    </location>
</feature>
<feature type="transmembrane region" description="Helical" evidence="2">
    <location>
        <begin position="248"/>
        <end position="268"/>
    </location>
</feature>
<gene>
    <name type="primary">cdsA</name>
    <name type="ordered locus">BAB1_1179</name>
</gene>
<sequence length="270" mass="28448">MSNLQTRIITAIVLGTITLWLTWVGGVGFTLFSIAIGLAMFYEWTELSATRQTAFSRLFGWAWLIVTGILLILDRGALLTIGFLVAGCAILLVTQWKSGRGWPAAGLFYAGFSALSLSLLRGDEPFGFTTIVFLFAVVWSTDITAYFNGRALGGPKLAPRFSPNKTWSGAIGGAAAAVAGGLLVASLVAAPGGWGVPVLALLLSIVSQIGDLAESWVKRQFGAKDSGRLLPGHGGVLDRVDGLVAAAALLYLFGAIFAEPDVLSAIFFSF</sequence>
<protein>
    <recommendedName>
        <fullName>Phosphatidate cytidylyltransferase</fullName>
        <ecNumber>2.7.7.41</ecNumber>
    </recommendedName>
    <alternativeName>
        <fullName>CDP-DAG synthase</fullName>
    </alternativeName>
    <alternativeName>
        <fullName>CDP-DG synthase</fullName>
    </alternativeName>
    <alternativeName>
        <fullName>CDP-diacylglycerol synthase</fullName>
        <shortName>CDS</shortName>
    </alternativeName>
    <alternativeName>
        <fullName>CDP-diglyceride pyrophosphorylase</fullName>
    </alternativeName>
    <alternativeName>
        <fullName>CDP-diglyceride synthase</fullName>
    </alternativeName>
    <alternativeName>
        <fullName>CTP:phosphatidate cytidylyltransferase</fullName>
    </alternativeName>
</protein>
<name>CDSA_BRUA2</name>
<proteinExistence type="inferred from homology"/>
<organism>
    <name type="scientific">Brucella abortus (strain 2308)</name>
    <dbReference type="NCBI Taxonomy" id="359391"/>
    <lineage>
        <taxon>Bacteria</taxon>
        <taxon>Pseudomonadati</taxon>
        <taxon>Pseudomonadota</taxon>
        <taxon>Alphaproteobacteria</taxon>
        <taxon>Hyphomicrobiales</taxon>
        <taxon>Brucellaceae</taxon>
        <taxon>Brucella/Ochrobactrum group</taxon>
        <taxon>Brucella</taxon>
    </lineage>
</organism>